<organism>
    <name type="scientific">Xenopus laevis</name>
    <name type="common">African clawed frog</name>
    <dbReference type="NCBI Taxonomy" id="8355"/>
    <lineage>
        <taxon>Eukaryota</taxon>
        <taxon>Metazoa</taxon>
        <taxon>Chordata</taxon>
        <taxon>Craniata</taxon>
        <taxon>Vertebrata</taxon>
        <taxon>Euteleostomi</taxon>
        <taxon>Amphibia</taxon>
        <taxon>Batrachia</taxon>
        <taxon>Anura</taxon>
        <taxon>Pipoidea</taxon>
        <taxon>Pipidae</taxon>
        <taxon>Xenopodinae</taxon>
        <taxon>Xenopus</taxon>
        <taxon>Xenopus</taxon>
    </lineage>
</organism>
<reference key="1">
    <citation type="submission" date="2005-07" db="EMBL/GenBank/DDBJ databases">
        <authorList>
            <consortium name="NIH - Xenopus Gene Collection (XGC) project"/>
        </authorList>
    </citation>
    <scope>NUCLEOTIDE SEQUENCE [LARGE SCALE MRNA]</scope>
</reference>
<feature type="chain" id="PRO_0000399776" description="N-terminal Xaa-Pro-Lys N-methyltransferase 1-A">
    <location>
        <begin position="1"/>
        <end position="224"/>
    </location>
</feature>
<feature type="binding site" evidence="1">
    <location>
        <position position="70"/>
    </location>
    <ligand>
        <name>S-adenosyl-L-methionine</name>
        <dbReference type="ChEBI" id="CHEBI:59789"/>
    </ligand>
</feature>
<feature type="binding site" evidence="1">
    <location>
        <position position="75"/>
    </location>
    <ligand>
        <name>S-adenosyl-L-methionine</name>
        <dbReference type="ChEBI" id="CHEBI:59789"/>
    </ligand>
</feature>
<feature type="binding site" evidence="1">
    <location>
        <begin position="92"/>
        <end position="94"/>
    </location>
    <ligand>
        <name>S-adenosyl-L-methionine</name>
        <dbReference type="ChEBI" id="CHEBI:59789"/>
    </ligand>
</feature>
<feature type="binding site" evidence="1">
    <location>
        <begin position="120"/>
        <end position="121"/>
    </location>
    <ligand>
        <name>S-adenosyl-L-methionine</name>
        <dbReference type="ChEBI" id="CHEBI:59789"/>
    </ligand>
</feature>
<feature type="binding site" evidence="1">
    <location>
        <position position="136"/>
    </location>
    <ligand>
        <name>S-adenosyl-L-methionine</name>
        <dbReference type="ChEBI" id="CHEBI:59789"/>
    </ligand>
</feature>
<gene>
    <name type="primary">ntmt1-a</name>
    <name type="synonym">mettl11a-a</name>
    <name type="synonym">MGC116538</name>
</gene>
<proteinExistence type="evidence at transcript level"/>
<name>NT1AA_XENLA</name>
<protein>
    <recommendedName>
        <fullName>N-terminal Xaa-Pro-Lys N-methyltransferase 1-A</fullName>
        <ecNumber evidence="1">2.1.1.244</ecNumber>
    </recommendedName>
    <alternativeName>
        <fullName>Alpha N-terminal protein methyltransferase 1A-A</fullName>
    </alternativeName>
    <alternativeName>
        <fullName>Methyltransferase-like protein 11A-A</fullName>
    </alternativeName>
    <alternativeName>
        <fullName>X-Pro-Lys N-terminal protein methyltransferase 1A-A</fullName>
        <shortName>NTM1A-A</shortName>
    </alternativeName>
</protein>
<evidence type="ECO:0000250" key="1">
    <source>
        <dbReference type="UniProtKB" id="Q9BV86"/>
    </source>
</evidence>
<evidence type="ECO:0000305" key="2"/>
<accession>Q4KL94</accession>
<dbReference type="EC" id="2.1.1.244" evidence="1"/>
<dbReference type="EMBL" id="BC099343">
    <property type="protein sequence ID" value="AAH99343.1"/>
    <property type="molecule type" value="mRNA"/>
</dbReference>
<dbReference type="RefSeq" id="NP_001090080.1">
    <property type="nucleotide sequence ID" value="NM_001096611.1"/>
</dbReference>
<dbReference type="SMR" id="Q4KL94"/>
<dbReference type="DNASU" id="735155"/>
<dbReference type="GeneID" id="735155"/>
<dbReference type="KEGG" id="xla:735155"/>
<dbReference type="AGR" id="Xenbase:XB-GENE-994939"/>
<dbReference type="CTD" id="735155"/>
<dbReference type="Xenbase" id="XB-GENE-994939">
    <property type="gene designation" value="ntmt1.L"/>
</dbReference>
<dbReference type="OrthoDB" id="1298661at2759"/>
<dbReference type="Proteomes" id="UP000186698">
    <property type="component" value="Chromosome 8L"/>
</dbReference>
<dbReference type="Bgee" id="735155">
    <property type="expression patterns" value="Expressed in oocyte and 19 other cell types or tissues"/>
</dbReference>
<dbReference type="GO" id="GO:0005737">
    <property type="term" value="C:cytoplasm"/>
    <property type="evidence" value="ECO:0000318"/>
    <property type="project" value="GO_Central"/>
</dbReference>
<dbReference type="GO" id="GO:0005634">
    <property type="term" value="C:nucleus"/>
    <property type="evidence" value="ECO:0000250"/>
    <property type="project" value="UniProtKB"/>
</dbReference>
<dbReference type="GO" id="GO:0042054">
    <property type="term" value="F:histone methyltransferase activity"/>
    <property type="evidence" value="ECO:0000250"/>
    <property type="project" value="UniProtKB"/>
</dbReference>
<dbReference type="GO" id="GO:0071885">
    <property type="term" value="F:N-terminal protein N-methyltransferase activity"/>
    <property type="evidence" value="ECO:0000250"/>
    <property type="project" value="UniProtKB"/>
</dbReference>
<dbReference type="GO" id="GO:0008276">
    <property type="term" value="F:protein methyltransferase activity"/>
    <property type="evidence" value="ECO:0000250"/>
    <property type="project" value="UniProtKB"/>
</dbReference>
<dbReference type="GO" id="GO:0007059">
    <property type="term" value="P:chromosome segregation"/>
    <property type="evidence" value="ECO:0000250"/>
    <property type="project" value="UniProtKB"/>
</dbReference>
<dbReference type="GO" id="GO:0018013">
    <property type="term" value="P:N-terminal peptidyl-glycine methylation"/>
    <property type="evidence" value="ECO:0000250"/>
    <property type="project" value="UniProtKB"/>
</dbReference>
<dbReference type="GO" id="GO:0018016">
    <property type="term" value="P:N-terminal peptidyl-proline dimethylation"/>
    <property type="evidence" value="ECO:0000250"/>
    <property type="project" value="UniProtKB"/>
</dbReference>
<dbReference type="GO" id="GO:0035572">
    <property type="term" value="P:N-terminal peptidyl-serine dimethylation"/>
    <property type="evidence" value="ECO:0000250"/>
    <property type="project" value="UniProtKB"/>
</dbReference>
<dbReference type="GO" id="GO:0035573">
    <property type="term" value="P:N-terminal peptidyl-serine trimethylation"/>
    <property type="evidence" value="ECO:0000250"/>
    <property type="project" value="UniProtKB"/>
</dbReference>
<dbReference type="GO" id="GO:0007051">
    <property type="term" value="P:spindle organization"/>
    <property type="evidence" value="ECO:0000250"/>
    <property type="project" value="UniProtKB"/>
</dbReference>
<dbReference type="CDD" id="cd02440">
    <property type="entry name" value="AdoMet_MTases"/>
    <property type="match status" value="1"/>
</dbReference>
<dbReference type="FunFam" id="3.40.50.150:FF:000025">
    <property type="entry name" value="N-terminal Xaa-Pro-Lys N-methyltransferase 1"/>
    <property type="match status" value="1"/>
</dbReference>
<dbReference type="Gene3D" id="3.40.50.150">
    <property type="entry name" value="Vaccinia Virus protein VP39"/>
    <property type="match status" value="1"/>
</dbReference>
<dbReference type="InterPro" id="IPR008576">
    <property type="entry name" value="MeTrfase_NTM1"/>
</dbReference>
<dbReference type="InterPro" id="IPR029063">
    <property type="entry name" value="SAM-dependent_MTases_sf"/>
</dbReference>
<dbReference type="PANTHER" id="PTHR12753">
    <property type="entry name" value="AD-003 - RELATED"/>
    <property type="match status" value="1"/>
</dbReference>
<dbReference type="PANTHER" id="PTHR12753:SF1">
    <property type="entry name" value="N-TERMINAL XAA-PRO-LYS N-METHYLTRANSFERASE 1"/>
    <property type="match status" value="1"/>
</dbReference>
<dbReference type="Pfam" id="PF05891">
    <property type="entry name" value="Methyltransf_PK"/>
    <property type="match status" value="1"/>
</dbReference>
<dbReference type="PIRSF" id="PIRSF016958">
    <property type="entry name" value="DUF858_MeTrfase_lik"/>
    <property type="match status" value="1"/>
</dbReference>
<dbReference type="SUPFAM" id="SSF53335">
    <property type="entry name" value="S-adenosyl-L-methionine-dependent methyltransferases"/>
    <property type="match status" value="1"/>
</dbReference>
<comment type="function">
    <text evidence="1">Distributive alpha-N-methyltransferase that methylates the N-terminus of target proteins containing the N-terminal motif [Ala/Gly/Pro/Ser]-Pro-Lys when the initiator Met is cleaved. Specifically catalyzes mono-, di- or tri-methylation of the exposed alpha-amino group of the Ala, Gly or Ser residue in the [Ala/Gly/Ser]-Pro-Lys motif and mono- or di-methylation of Pro in the Pro-Pro-Lys motif. Required during mitosis for normal bipolar spindle formation and chromosome segregation via its action on target proteins.</text>
</comment>
<comment type="catalytic activity">
    <reaction evidence="1">
        <text>N-terminal L-alanyl-L-prolyl-L-lysyl-[protein] + 3 S-adenosyl-L-methionine = N-terminal N,N,N-trimethyl-L-alanyl-L-prolyl-L-lysyl-[protein] + 3 S-adenosyl-L-homocysteine + 3 H(+)</text>
        <dbReference type="Rhea" id="RHEA:54712"/>
        <dbReference type="Rhea" id="RHEA-COMP:13785"/>
        <dbReference type="Rhea" id="RHEA-COMP:13971"/>
        <dbReference type="ChEBI" id="CHEBI:15378"/>
        <dbReference type="ChEBI" id="CHEBI:57856"/>
        <dbReference type="ChEBI" id="CHEBI:59789"/>
        <dbReference type="ChEBI" id="CHEBI:138057"/>
        <dbReference type="ChEBI" id="CHEBI:138315"/>
        <dbReference type="EC" id="2.1.1.244"/>
    </reaction>
</comment>
<comment type="catalytic activity">
    <reaction evidence="1">
        <text>N-terminal L-seryl-L-prolyl-L-lysyl-[protein] + 3 S-adenosyl-L-methionine = N-terminal N,N,N-trimethyl-L-seryl-L-prolyl-L-lysyl-[protein] + 3 S-adenosyl-L-homocysteine + 3 H(+)</text>
        <dbReference type="Rhea" id="RHEA:54724"/>
        <dbReference type="Rhea" id="RHEA-COMP:13789"/>
        <dbReference type="Rhea" id="RHEA-COMP:13973"/>
        <dbReference type="ChEBI" id="CHEBI:15378"/>
        <dbReference type="ChEBI" id="CHEBI:57856"/>
        <dbReference type="ChEBI" id="CHEBI:59789"/>
        <dbReference type="ChEBI" id="CHEBI:138061"/>
        <dbReference type="ChEBI" id="CHEBI:138317"/>
        <dbReference type="EC" id="2.1.1.244"/>
    </reaction>
</comment>
<comment type="catalytic activity">
    <reaction evidence="1">
        <text>N-terminal L-prolyl-L-prolyl-L-lysyl-[protein] + 2 S-adenosyl-L-methionine = N-terminal N,N-dimethyl-L-prolyl-L-prolyl-L-lysyl-[protein] + 2 S-adenosyl-L-homocysteine + 2 H(+)</text>
        <dbReference type="Rhea" id="RHEA:54736"/>
        <dbReference type="Rhea" id="RHEA-COMP:13787"/>
        <dbReference type="Rhea" id="RHEA-COMP:13974"/>
        <dbReference type="ChEBI" id="CHEBI:15378"/>
        <dbReference type="ChEBI" id="CHEBI:57856"/>
        <dbReference type="ChEBI" id="CHEBI:59789"/>
        <dbReference type="ChEBI" id="CHEBI:138059"/>
        <dbReference type="ChEBI" id="CHEBI:138318"/>
        <dbReference type="EC" id="2.1.1.244"/>
    </reaction>
</comment>
<comment type="subcellular location">
    <subcellularLocation>
        <location evidence="1">Nucleus</location>
    </subcellularLocation>
    <text evidence="1">Predominantly nuclear.</text>
</comment>
<comment type="similarity">
    <text evidence="2">Belongs to the methyltransferase superfamily. NTM1 family.</text>
</comment>
<sequence>MSTELVEDETQFYGKAQNYWKNVPPTVDGMLGGYGHISNVDLNGSKKFLQRFLRQEGSNKTGNACALDCGAGIGRITKRLLLPLFKTVDMVDVTDEFLNKAKSFLGEEGKRVGNYFCCGLQEFSPEPNRYDVIWIQWVIGHLTDEHLVNFLQRCRLGLRPNGIIVIKDNVTQDASIMDDVDSSICREIDLVRKLIKQAGLSILAVERQENFPDEIYHVFSFAMR</sequence>
<keyword id="KW-0489">Methyltransferase</keyword>
<keyword id="KW-0539">Nucleus</keyword>
<keyword id="KW-1185">Reference proteome</keyword>
<keyword id="KW-0949">S-adenosyl-L-methionine</keyword>
<keyword id="KW-0808">Transferase</keyword>